<evidence type="ECO:0000250" key="1"/>
<evidence type="ECO:0000305" key="2"/>
<proteinExistence type="evidence at transcript level"/>
<organism>
    <name type="scientific">Arabidopsis thaliana</name>
    <name type="common">Mouse-ear cress</name>
    <dbReference type="NCBI Taxonomy" id="3702"/>
    <lineage>
        <taxon>Eukaryota</taxon>
        <taxon>Viridiplantae</taxon>
        <taxon>Streptophyta</taxon>
        <taxon>Embryophyta</taxon>
        <taxon>Tracheophyta</taxon>
        <taxon>Spermatophyta</taxon>
        <taxon>Magnoliopsida</taxon>
        <taxon>eudicotyledons</taxon>
        <taxon>Gunneridae</taxon>
        <taxon>Pentapetalae</taxon>
        <taxon>rosids</taxon>
        <taxon>malvids</taxon>
        <taxon>Brassicales</taxon>
        <taxon>Brassicaceae</taxon>
        <taxon>Camelineae</taxon>
        <taxon>Arabidopsis</taxon>
    </lineage>
</organism>
<name>NTM1_ARATH</name>
<protein>
    <recommendedName>
        <fullName>Alpha N-terminal protein methyltransferase 1</fullName>
        <ecNumber>2.1.1.244</ecNumber>
    </recommendedName>
    <alternativeName>
        <fullName>X-Pro-Lys N-terminal protein methyltransferase 1</fullName>
        <shortName>NTM1</shortName>
    </alternativeName>
</protein>
<sequence length="276" mass="31247">MDICGVDSEGKEFNSVQEMWREEIGEGDETKKTQWYRDGVSYWEGVEASVDGVLGGYGHVNDADIIGSEVFLKTLLQERLVNNVGANQHLVALDCGSGIGRITKNLLIRYFNEVDLLEPVAQFLDAARENLASAGSETHKATNFFCVPLQEFTPAAGRYDVIWVQWCIGHLTDNDFVSFFNRAKGYLKPGGFFVVKENLAKNGFVLDKEDHSITRSDPYFKQLFRQCGLHLYRTKDQKGLPQELFAVKMYALTVDTPPKIHRTRSKTRSNRPQIIK</sequence>
<gene>
    <name type="ordered locus">At5g44450</name>
    <name type="ORF">MFC16.11</name>
</gene>
<reference key="1">
    <citation type="journal article" date="1999" name="DNA Res.">
        <title>Structural analysis of Arabidopsis thaliana chromosome 5. IX. Sequence features of the regions of 1,011,550 bp covered by seventeen P1 and TAC clones.</title>
        <authorList>
            <person name="Kaneko T."/>
            <person name="Katoh T."/>
            <person name="Sato S."/>
            <person name="Nakamura Y."/>
            <person name="Asamizu E."/>
            <person name="Kotani H."/>
            <person name="Miyajima N."/>
            <person name="Tabata S."/>
        </authorList>
    </citation>
    <scope>NUCLEOTIDE SEQUENCE [LARGE SCALE GENOMIC DNA]</scope>
    <source>
        <strain>cv. Columbia</strain>
    </source>
</reference>
<reference key="2">
    <citation type="journal article" date="2017" name="Plant J.">
        <title>Araport11: a complete reannotation of the Arabidopsis thaliana reference genome.</title>
        <authorList>
            <person name="Cheng C.Y."/>
            <person name="Krishnakumar V."/>
            <person name="Chan A.P."/>
            <person name="Thibaud-Nissen F."/>
            <person name="Schobel S."/>
            <person name="Town C.D."/>
        </authorList>
    </citation>
    <scope>GENOME REANNOTATION</scope>
    <source>
        <strain>cv. Columbia</strain>
    </source>
</reference>
<reference key="3">
    <citation type="submission" date="2005-01" db="EMBL/GenBank/DDBJ databases">
        <title>Arabidopsis ORF clones.</title>
        <authorList>
            <person name="Kim C.J."/>
            <person name="Chen H."/>
            <person name="Cheuk R.F."/>
            <person name="Shinn P."/>
            <person name="Ecker J.R."/>
        </authorList>
    </citation>
    <scope>NUCLEOTIDE SEQUENCE [LARGE SCALE MRNA]</scope>
    <source>
        <strain>cv. Columbia</strain>
    </source>
</reference>
<dbReference type="EC" id="2.1.1.244"/>
<dbReference type="EMBL" id="AB017065">
    <property type="protein sequence ID" value="BAB09152.1"/>
    <property type="status" value="ALT_SEQ"/>
    <property type="molecule type" value="Genomic_DNA"/>
</dbReference>
<dbReference type="EMBL" id="CP002688">
    <property type="protein sequence ID" value="AED95110.2"/>
    <property type="molecule type" value="Genomic_DNA"/>
</dbReference>
<dbReference type="EMBL" id="BT020227">
    <property type="protein sequence ID" value="AAV74221.1"/>
    <property type="molecule type" value="mRNA"/>
</dbReference>
<dbReference type="EMBL" id="BT020502">
    <property type="protein sequence ID" value="AAW39003.1"/>
    <property type="molecule type" value="mRNA"/>
</dbReference>
<dbReference type="RefSeq" id="NP_199258.4">
    <property type="nucleotide sequence ID" value="NM_123812.5"/>
</dbReference>
<dbReference type="SMR" id="Q5PP70"/>
<dbReference type="FunCoup" id="Q5PP70">
    <property type="interactions" value="3040"/>
</dbReference>
<dbReference type="PaxDb" id="3702-AT5G44450.1"/>
<dbReference type="ProteomicsDB" id="248955"/>
<dbReference type="DNASU" id="834472"/>
<dbReference type="EnsemblPlants" id="AT5G44450.1">
    <property type="protein sequence ID" value="AT5G44450.1"/>
    <property type="gene ID" value="AT5G44450"/>
</dbReference>
<dbReference type="GeneID" id="834472"/>
<dbReference type="Gramene" id="AT5G44450.1">
    <property type="protein sequence ID" value="AT5G44450.1"/>
    <property type="gene ID" value="AT5G44450"/>
</dbReference>
<dbReference type="KEGG" id="ath:AT5G44450"/>
<dbReference type="Araport" id="AT5G44450"/>
<dbReference type="TAIR" id="AT5G44450"/>
<dbReference type="eggNOG" id="KOG3178">
    <property type="taxonomic scope" value="Eukaryota"/>
</dbReference>
<dbReference type="HOGENOM" id="CLU_055356_1_0_1"/>
<dbReference type="InParanoid" id="Q5PP70"/>
<dbReference type="OMA" id="PVRMYCL"/>
<dbReference type="PhylomeDB" id="Q5PP70"/>
<dbReference type="PRO" id="PR:Q5PP70"/>
<dbReference type="Proteomes" id="UP000006548">
    <property type="component" value="Chromosome 5"/>
</dbReference>
<dbReference type="ExpressionAtlas" id="Q5PP70">
    <property type="expression patterns" value="baseline and differential"/>
</dbReference>
<dbReference type="GO" id="GO:0071885">
    <property type="term" value="F:N-terminal protein N-methyltransferase activity"/>
    <property type="evidence" value="ECO:0007669"/>
    <property type="project" value="UniProtKB-EC"/>
</dbReference>
<dbReference type="GO" id="GO:0032259">
    <property type="term" value="P:methylation"/>
    <property type="evidence" value="ECO:0007669"/>
    <property type="project" value="UniProtKB-KW"/>
</dbReference>
<dbReference type="CDD" id="cd02440">
    <property type="entry name" value="AdoMet_MTases"/>
    <property type="match status" value="1"/>
</dbReference>
<dbReference type="FunFam" id="3.40.50.150:FF:000025">
    <property type="entry name" value="N-terminal Xaa-Pro-Lys N-methyltransferase 1"/>
    <property type="match status" value="1"/>
</dbReference>
<dbReference type="Gene3D" id="3.40.50.150">
    <property type="entry name" value="Vaccinia Virus protein VP39"/>
    <property type="match status" value="1"/>
</dbReference>
<dbReference type="InterPro" id="IPR008576">
    <property type="entry name" value="MeTrfase_NTM1"/>
</dbReference>
<dbReference type="InterPro" id="IPR029063">
    <property type="entry name" value="SAM-dependent_MTases_sf"/>
</dbReference>
<dbReference type="PANTHER" id="PTHR12753">
    <property type="entry name" value="AD-003 - RELATED"/>
    <property type="match status" value="1"/>
</dbReference>
<dbReference type="PANTHER" id="PTHR12753:SF0">
    <property type="entry name" value="ALPHA N-TERMINAL PROTEIN METHYLTRANSFERASE 1"/>
    <property type="match status" value="1"/>
</dbReference>
<dbReference type="Pfam" id="PF05891">
    <property type="entry name" value="Methyltransf_PK"/>
    <property type="match status" value="1"/>
</dbReference>
<dbReference type="PIRSF" id="PIRSF016958">
    <property type="entry name" value="DUF858_MeTrfase_lik"/>
    <property type="match status" value="1"/>
</dbReference>
<dbReference type="SUPFAM" id="SSF53335">
    <property type="entry name" value="S-adenosyl-L-methionine-dependent methyltransferases"/>
    <property type="match status" value="1"/>
</dbReference>
<feature type="chain" id="PRO_0000399786" description="Alpha N-terminal protein methyltransferase 1">
    <location>
        <begin position="1"/>
        <end position="276"/>
    </location>
</feature>
<feature type="binding site" evidence="1">
    <location>
        <position position="96"/>
    </location>
    <ligand>
        <name>S-adenosyl-L-methionine</name>
        <dbReference type="ChEBI" id="CHEBI:59789"/>
    </ligand>
</feature>
<feature type="binding site" evidence="1">
    <location>
        <position position="101"/>
    </location>
    <ligand>
        <name>S-adenosyl-L-methionine</name>
        <dbReference type="ChEBI" id="CHEBI:59789"/>
    </ligand>
</feature>
<feature type="binding site" evidence="1">
    <location>
        <begin position="118"/>
        <end position="120"/>
    </location>
    <ligand>
        <name>S-adenosyl-L-methionine</name>
        <dbReference type="ChEBI" id="CHEBI:59789"/>
    </ligand>
</feature>
<feature type="binding site" evidence="1">
    <location>
        <begin position="149"/>
        <end position="150"/>
    </location>
    <ligand>
        <name>S-adenosyl-L-methionine</name>
        <dbReference type="ChEBI" id="CHEBI:59789"/>
    </ligand>
</feature>
<feature type="binding site" evidence="1">
    <location>
        <position position="165"/>
    </location>
    <ligand>
        <name>S-adenosyl-L-methionine</name>
        <dbReference type="ChEBI" id="CHEBI:59789"/>
    </ligand>
</feature>
<comment type="function">
    <text evidence="1">Alpha-N-methyltransferase that methylates the N-terminus of target proteins containing the N-terminal motif [Ala/Pro/Ser]-Pro-Lys when the initiator Met is cleaved. Specifically catalyzes mono-, di- or tri-methylation of exposed alpha-amino group of Ala or Ser residue in the [Ala/Ser]-Pro-Lys motif and mono- or di-methylation of Pro in the Pro-Pro-Lys motif (By similarity).</text>
</comment>
<comment type="catalytic activity">
    <reaction>
        <text>N-terminal L-alanyl-L-prolyl-L-lysyl-[protein] + 3 S-adenosyl-L-methionine = N-terminal N,N,N-trimethyl-L-alanyl-L-prolyl-L-lysyl-[protein] + 3 S-adenosyl-L-homocysteine + 3 H(+)</text>
        <dbReference type="Rhea" id="RHEA:54712"/>
        <dbReference type="Rhea" id="RHEA-COMP:13785"/>
        <dbReference type="Rhea" id="RHEA-COMP:13971"/>
        <dbReference type="ChEBI" id="CHEBI:15378"/>
        <dbReference type="ChEBI" id="CHEBI:57856"/>
        <dbReference type="ChEBI" id="CHEBI:59789"/>
        <dbReference type="ChEBI" id="CHEBI:138057"/>
        <dbReference type="ChEBI" id="CHEBI:138315"/>
        <dbReference type="EC" id="2.1.1.244"/>
    </reaction>
</comment>
<comment type="catalytic activity">
    <reaction>
        <text>N-terminal L-seryl-L-prolyl-L-lysyl-[protein] + 3 S-adenosyl-L-methionine = N-terminal N,N,N-trimethyl-L-seryl-L-prolyl-L-lysyl-[protein] + 3 S-adenosyl-L-homocysteine + 3 H(+)</text>
        <dbReference type="Rhea" id="RHEA:54724"/>
        <dbReference type="Rhea" id="RHEA-COMP:13789"/>
        <dbReference type="Rhea" id="RHEA-COMP:13973"/>
        <dbReference type="ChEBI" id="CHEBI:15378"/>
        <dbReference type="ChEBI" id="CHEBI:57856"/>
        <dbReference type="ChEBI" id="CHEBI:59789"/>
        <dbReference type="ChEBI" id="CHEBI:138061"/>
        <dbReference type="ChEBI" id="CHEBI:138317"/>
        <dbReference type="EC" id="2.1.1.244"/>
    </reaction>
</comment>
<comment type="catalytic activity">
    <reaction>
        <text>N-terminal L-prolyl-L-prolyl-L-lysyl-[protein] + 2 S-adenosyl-L-methionine = N-terminal N,N-dimethyl-L-prolyl-L-prolyl-L-lysyl-[protein] + 2 S-adenosyl-L-homocysteine + 2 H(+)</text>
        <dbReference type="Rhea" id="RHEA:54736"/>
        <dbReference type="Rhea" id="RHEA-COMP:13787"/>
        <dbReference type="Rhea" id="RHEA-COMP:13974"/>
        <dbReference type="ChEBI" id="CHEBI:15378"/>
        <dbReference type="ChEBI" id="CHEBI:57856"/>
        <dbReference type="ChEBI" id="CHEBI:59789"/>
        <dbReference type="ChEBI" id="CHEBI:138059"/>
        <dbReference type="ChEBI" id="CHEBI:138318"/>
        <dbReference type="EC" id="2.1.1.244"/>
    </reaction>
</comment>
<comment type="similarity">
    <text evidence="2">Belongs to the methyltransferase superfamily. NTM1 family.</text>
</comment>
<comment type="sequence caution" evidence="2">
    <conflict type="erroneous gene model prediction">
        <sequence resource="EMBL-CDS" id="BAB09152"/>
    </conflict>
</comment>
<keyword id="KW-0489">Methyltransferase</keyword>
<keyword id="KW-1185">Reference proteome</keyword>
<keyword id="KW-0949">S-adenosyl-L-methionine</keyword>
<keyword id="KW-0808">Transferase</keyword>
<accession>Q5PP70</accession>
<accession>F4KA87</accession>
<accession>Q9FI20</accession>